<sequence length="339" mass="37494">MTRISLTRYLVEEQRKHNTIQPELRLLIEVVARACKAISNSVNKGALAGVLGSAGTGNVQGETQQKLDVIANEVLLDANEWGGHLAAMASEEMESFYEIPNRYPKGEYLLMFDPLDGSSNIDVNVSIGTIFSVLHMPKPGQTVTEADFLQPGTHQVAAGYAVYGPQTTLVLTVGNGVHVFTLDREAGSFVLTQSDVQIPEDTKEFAINMSNMRHWAPPVRKYIDECLAGDEGPRGKNFNMRWIASMVADVHRILTRGGIFMYPWDKREPEKAGKLRLMYEANPMAMLIEQAGGAATNGHIRILDVQPEKLHQRVSVILGSKNEVERVTRYHHEAAGQQG</sequence>
<dbReference type="EC" id="3.1.3.11" evidence="1"/>
<dbReference type="EMBL" id="CP000090">
    <property type="protein sequence ID" value="AAZ61806.1"/>
    <property type="molecule type" value="Genomic_DNA"/>
</dbReference>
<dbReference type="SMR" id="Q46YH7"/>
<dbReference type="STRING" id="264198.Reut_A2444"/>
<dbReference type="KEGG" id="reu:Reut_A2444"/>
<dbReference type="eggNOG" id="COG0158">
    <property type="taxonomic scope" value="Bacteria"/>
</dbReference>
<dbReference type="HOGENOM" id="CLU_039977_0_0_4"/>
<dbReference type="OrthoDB" id="9806756at2"/>
<dbReference type="UniPathway" id="UPA00138"/>
<dbReference type="GO" id="GO:0005829">
    <property type="term" value="C:cytosol"/>
    <property type="evidence" value="ECO:0007669"/>
    <property type="project" value="TreeGrafter"/>
</dbReference>
<dbReference type="GO" id="GO:0042132">
    <property type="term" value="F:fructose 1,6-bisphosphate 1-phosphatase activity"/>
    <property type="evidence" value="ECO:0007669"/>
    <property type="project" value="UniProtKB-UniRule"/>
</dbReference>
<dbReference type="GO" id="GO:0000287">
    <property type="term" value="F:magnesium ion binding"/>
    <property type="evidence" value="ECO:0007669"/>
    <property type="project" value="UniProtKB-UniRule"/>
</dbReference>
<dbReference type="GO" id="GO:0030388">
    <property type="term" value="P:fructose 1,6-bisphosphate metabolic process"/>
    <property type="evidence" value="ECO:0007669"/>
    <property type="project" value="TreeGrafter"/>
</dbReference>
<dbReference type="GO" id="GO:0006002">
    <property type="term" value="P:fructose 6-phosphate metabolic process"/>
    <property type="evidence" value="ECO:0007669"/>
    <property type="project" value="TreeGrafter"/>
</dbReference>
<dbReference type="GO" id="GO:0006000">
    <property type="term" value="P:fructose metabolic process"/>
    <property type="evidence" value="ECO:0007669"/>
    <property type="project" value="TreeGrafter"/>
</dbReference>
<dbReference type="GO" id="GO:0006094">
    <property type="term" value="P:gluconeogenesis"/>
    <property type="evidence" value="ECO:0007669"/>
    <property type="project" value="UniProtKB-UniRule"/>
</dbReference>
<dbReference type="GO" id="GO:0005986">
    <property type="term" value="P:sucrose biosynthetic process"/>
    <property type="evidence" value="ECO:0007669"/>
    <property type="project" value="TreeGrafter"/>
</dbReference>
<dbReference type="CDD" id="cd00354">
    <property type="entry name" value="FBPase"/>
    <property type="match status" value="1"/>
</dbReference>
<dbReference type="FunFam" id="3.30.540.10:FF:000006">
    <property type="entry name" value="Fructose-1,6-bisphosphatase class 1"/>
    <property type="match status" value="1"/>
</dbReference>
<dbReference type="FunFam" id="3.40.190.80:FF:000011">
    <property type="entry name" value="Fructose-1,6-bisphosphatase class 1"/>
    <property type="match status" value="1"/>
</dbReference>
<dbReference type="Gene3D" id="3.40.190.80">
    <property type="match status" value="1"/>
</dbReference>
<dbReference type="Gene3D" id="3.30.540.10">
    <property type="entry name" value="Fructose-1,6-Bisphosphatase, subunit A, domain 1"/>
    <property type="match status" value="1"/>
</dbReference>
<dbReference type="HAMAP" id="MF_01855">
    <property type="entry name" value="FBPase_class1"/>
    <property type="match status" value="1"/>
</dbReference>
<dbReference type="InterPro" id="IPR044015">
    <property type="entry name" value="FBPase_C_dom"/>
</dbReference>
<dbReference type="InterPro" id="IPR000146">
    <property type="entry name" value="FBPase_class-1"/>
</dbReference>
<dbReference type="InterPro" id="IPR033391">
    <property type="entry name" value="FBPase_N"/>
</dbReference>
<dbReference type="InterPro" id="IPR028343">
    <property type="entry name" value="FBPtase"/>
</dbReference>
<dbReference type="NCBIfam" id="NF006778">
    <property type="entry name" value="PRK09293.1-1"/>
    <property type="match status" value="1"/>
</dbReference>
<dbReference type="NCBIfam" id="NF006779">
    <property type="entry name" value="PRK09293.1-3"/>
    <property type="match status" value="1"/>
</dbReference>
<dbReference type="NCBIfam" id="NF006780">
    <property type="entry name" value="PRK09293.1-4"/>
    <property type="match status" value="1"/>
</dbReference>
<dbReference type="PANTHER" id="PTHR11556">
    <property type="entry name" value="FRUCTOSE-1,6-BISPHOSPHATASE-RELATED"/>
    <property type="match status" value="1"/>
</dbReference>
<dbReference type="PANTHER" id="PTHR11556:SF35">
    <property type="entry name" value="SEDOHEPTULOSE-1,7-BISPHOSPHATASE, CHLOROPLASTIC"/>
    <property type="match status" value="1"/>
</dbReference>
<dbReference type="Pfam" id="PF00316">
    <property type="entry name" value="FBPase"/>
    <property type="match status" value="1"/>
</dbReference>
<dbReference type="Pfam" id="PF18913">
    <property type="entry name" value="FBPase_C"/>
    <property type="match status" value="1"/>
</dbReference>
<dbReference type="PIRSF" id="PIRSF500210">
    <property type="entry name" value="FBPtase"/>
    <property type="match status" value="1"/>
</dbReference>
<dbReference type="PIRSF" id="PIRSF000904">
    <property type="entry name" value="FBPtase_SBPase"/>
    <property type="match status" value="1"/>
</dbReference>
<dbReference type="PRINTS" id="PR00115">
    <property type="entry name" value="F16BPHPHTASE"/>
</dbReference>
<dbReference type="SUPFAM" id="SSF56655">
    <property type="entry name" value="Carbohydrate phosphatase"/>
    <property type="match status" value="1"/>
</dbReference>
<proteinExistence type="inferred from homology"/>
<gene>
    <name evidence="1" type="primary">fbp</name>
    <name type="ordered locus">Reut_A2444</name>
</gene>
<protein>
    <recommendedName>
        <fullName evidence="1">Fructose-1,6-bisphosphatase class 1</fullName>
        <shortName evidence="1">FBPase class 1</shortName>
        <ecNumber evidence="1">3.1.3.11</ecNumber>
    </recommendedName>
    <alternativeName>
        <fullName evidence="1">D-fructose-1,6-bisphosphate 1-phosphohydrolase class 1</fullName>
    </alternativeName>
</protein>
<name>F16PA_CUPPJ</name>
<keyword id="KW-0119">Carbohydrate metabolism</keyword>
<keyword id="KW-0963">Cytoplasm</keyword>
<keyword id="KW-0378">Hydrolase</keyword>
<keyword id="KW-0460">Magnesium</keyword>
<keyword id="KW-0479">Metal-binding</keyword>
<accession>Q46YH7</accession>
<reference key="1">
    <citation type="journal article" date="2010" name="PLoS ONE">
        <title>The complete multipartite genome sequence of Cupriavidus necator JMP134, a versatile pollutant degrader.</title>
        <authorList>
            <person name="Lykidis A."/>
            <person name="Perez-Pantoja D."/>
            <person name="Ledger T."/>
            <person name="Mavromatis K."/>
            <person name="Anderson I.J."/>
            <person name="Ivanova N.N."/>
            <person name="Hooper S.D."/>
            <person name="Lapidus A."/>
            <person name="Lucas S."/>
            <person name="Gonzalez B."/>
            <person name="Kyrpides N.C."/>
        </authorList>
    </citation>
    <scope>NUCLEOTIDE SEQUENCE [LARGE SCALE GENOMIC DNA]</scope>
    <source>
        <strain>JMP134 / LMG 1197</strain>
    </source>
</reference>
<evidence type="ECO:0000255" key="1">
    <source>
        <dbReference type="HAMAP-Rule" id="MF_01855"/>
    </source>
</evidence>
<organism>
    <name type="scientific">Cupriavidus pinatubonensis (strain JMP 134 / LMG 1197)</name>
    <name type="common">Cupriavidus necator (strain JMP 134)</name>
    <dbReference type="NCBI Taxonomy" id="264198"/>
    <lineage>
        <taxon>Bacteria</taxon>
        <taxon>Pseudomonadati</taxon>
        <taxon>Pseudomonadota</taxon>
        <taxon>Betaproteobacteria</taxon>
        <taxon>Burkholderiales</taxon>
        <taxon>Burkholderiaceae</taxon>
        <taxon>Cupriavidus</taxon>
    </lineage>
</organism>
<comment type="catalytic activity">
    <reaction evidence="1">
        <text>beta-D-fructose 1,6-bisphosphate + H2O = beta-D-fructose 6-phosphate + phosphate</text>
        <dbReference type="Rhea" id="RHEA:11064"/>
        <dbReference type="ChEBI" id="CHEBI:15377"/>
        <dbReference type="ChEBI" id="CHEBI:32966"/>
        <dbReference type="ChEBI" id="CHEBI:43474"/>
        <dbReference type="ChEBI" id="CHEBI:57634"/>
        <dbReference type="EC" id="3.1.3.11"/>
    </reaction>
</comment>
<comment type="cofactor">
    <cofactor evidence="1">
        <name>Mg(2+)</name>
        <dbReference type="ChEBI" id="CHEBI:18420"/>
    </cofactor>
    <text evidence="1">Binds 2 magnesium ions per subunit.</text>
</comment>
<comment type="pathway">
    <text evidence="1">Carbohydrate biosynthesis; gluconeogenesis.</text>
</comment>
<comment type="subunit">
    <text evidence="1">Homotetramer.</text>
</comment>
<comment type="subcellular location">
    <subcellularLocation>
        <location evidence="1">Cytoplasm</location>
    </subcellularLocation>
</comment>
<comment type="similarity">
    <text evidence="1">Belongs to the FBPase class 1 family.</text>
</comment>
<feature type="chain" id="PRO_0000364661" description="Fructose-1,6-bisphosphatase class 1">
    <location>
        <begin position="1"/>
        <end position="339"/>
    </location>
</feature>
<feature type="binding site" evidence="1">
    <location>
        <position position="91"/>
    </location>
    <ligand>
        <name>Mg(2+)</name>
        <dbReference type="ChEBI" id="CHEBI:18420"/>
        <label>1</label>
    </ligand>
</feature>
<feature type="binding site" evidence="1">
    <location>
        <position position="113"/>
    </location>
    <ligand>
        <name>Mg(2+)</name>
        <dbReference type="ChEBI" id="CHEBI:18420"/>
        <label>1</label>
    </ligand>
</feature>
<feature type="binding site" evidence="1">
    <location>
        <position position="113"/>
    </location>
    <ligand>
        <name>Mg(2+)</name>
        <dbReference type="ChEBI" id="CHEBI:18420"/>
        <label>2</label>
    </ligand>
</feature>
<feature type="binding site" evidence="1">
    <location>
        <position position="115"/>
    </location>
    <ligand>
        <name>Mg(2+)</name>
        <dbReference type="ChEBI" id="CHEBI:18420"/>
        <label>1</label>
    </ligand>
</feature>
<feature type="binding site" evidence="1">
    <location>
        <begin position="116"/>
        <end position="119"/>
    </location>
    <ligand>
        <name>substrate</name>
    </ligand>
</feature>
<feature type="binding site" evidence="1">
    <location>
        <position position="116"/>
    </location>
    <ligand>
        <name>Mg(2+)</name>
        <dbReference type="ChEBI" id="CHEBI:18420"/>
        <label>2</label>
    </ligand>
</feature>
<feature type="binding site" evidence="1">
    <location>
        <position position="208"/>
    </location>
    <ligand>
        <name>substrate</name>
    </ligand>
</feature>
<feature type="binding site" evidence="1">
    <location>
        <position position="274"/>
    </location>
    <ligand>
        <name>substrate</name>
    </ligand>
</feature>
<feature type="binding site" evidence="1">
    <location>
        <position position="280"/>
    </location>
    <ligand>
        <name>Mg(2+)</name>
        <dbReference type="ChEBI" id="CHEBI:18420"/>
        <label>2</label>
    </ligand>
</feature>